<reference key="1">
    <citation type="journal article" date="2003" name="Nat. Genet.">
        <title>Comparative analysis of the genome sequences of Bordetella pertussis, Bordetella parapertussis and Bordetella bronchiseptica.</title>
        <authorList>
            <person name="Parkhill J."/>
            <person name="Sebaihia M."/>
            <person name="Preston A."/>
            <person name="Murphy L.D."/>
            <person name="Thomson N.R."/>
            <person name="Harris D.E."/>
            <person name="Holden M.T.G."/>
            <person name="Churcher C.M."/>
            <person name="Bentley S.D."/>
            <person name="Mungall K.L."/>
            <person name="Cerdeno-Tarraga A.-M."/>
            <person name="Temple L."/>
            <person name="James K.D."/>
            <person name="Harris B."/>
            <person name="Quail M.A."/>
            <person name="Achtman M."/>
            <person name="Atkin R."/>
            <person name="Baker S."/>
            <person name="Basham D."/>
            <person name="Bason N."/>
            <person name="Cherevach I."/>
            <person name="Chillingworth T."/>
            <person name="Collins M."/>
            <person name="Cronin A."/>
            <person name="Davis P."/>
            <person name="Doggett J."/>
            <person name="Feltwell T."/>
            <person name="Goble A."/>
            <person name="Hamlin N."/>
            <person name="Hauser H."/>
            <person name="Holroyd S."/>
            <person name="Jagels K."/>
            <person name="Leather S."/>
            <person name="Moule S."/>
            <person name="Norberczak H."/>
            <person name="O'Neil S."/>
            <person name="Ormond D."/>
            <person name="Price C."/>
            <person name="Rabbinowitsch E."/>
            <person name="Rutter S."/>
            <person name="Sanders M."/>
            <person name="Saunders D."/>
            <person name="Seeger K."/>
            <person name="Sharp S."/>
            <person name="Simmonds M."/>
            <person name="Skelton J."/>
            <person name="Squares R."/>
            <person name="Squares S."/>
            <person name="Stevens K."/>
            <person name="Unwin L."/>
            <person name="Whitehead S."/>
            <person name="Barrell B.G."/>
            <person name="Maskell D.J."/>
        </authorList>
    </citation>
    <scope>NUCLEOTIDE SEQUENCE [LARGE SCALE GENOMIC DNA]</scope>
    <source>
        <strain>Tohama I / ATCC BAA-589 / NCTC 13251</strain>
    </source>
</reference>
<dbReference type="EMBL" id="BX640421">
    <property type="protein sequence ID" value="CAE43552.1"/>
    <property type="molecule type" value="Genomic_DNA"/>
</dbReference>
<dbReference type="RefSeq" id="NP_881829.1">
    <property type="nucleotide sequence ID" value="NC_002929.2"/>
</dbReference>
<dbReference type="RefSeq" id="WP_003817813.1">
    <property type="nucleotide sequence ID" value="NZ_CP039022.1"/>
</dbReference>
<dbReference type="SMR" id="Q7VU45"/>
<dbReference type="STRING" id="257313.BP3287"/>
<dbReference type="PaxDb" id="257313-BP3287"/>
<dbReference type="GeneID" id="69603213"/>
<dbReference type="KEGG" id="bpe:BP3287"/>
<dbReference type="PATRIC" id="fig|257313.5.peg.3559"/>
<dbReference type="eggNOG" id="COG0224">
    <property type="taxonomic scope" value="Bacteria"/>
</dbReference>
<dbReference type="HOGENOM" id="CLU_050669_0_1_4"/>
<dbReference type="Proteomes" id="UP000002676">
    <property type="component" value="Chromosome"/>
</dbReference>
<dbReference type="GO" id="GO:0005886">
    <property type="term" value="C:plasma membrane"/>
    <property type="evidence" value="ECO:0007669"/>
    <property type="project" value="UniProtKB-SubCell"/>
</dbReference>
<dbReference type="GO" id="GO:0045259">
    <property type="term" value="C:proton-transporting ATP synthase complex"/>
    <property type="evidence" value="ECO:0007669"/>
    <property type="project" value="UniProtKB-KW"/>
</dbReference>
<dbReference type="GO" id="GO:0005524">
    <property type="term" value="F:ATP binding"/>
    <property type="evidence" value="ECO:0007669"/>
    <property type="project" value="UniProtKB-UniRule"/>
</dbReference>
<dbReference type="GO" id="GO:0046933">
    <property type="term" value="F:proton-transporting ATP synthase activity, rotational mechanism"/>
    <property type="evidence" value="ECO:0007669"/>
    <property type="project" value="UniProtKB-UniRule"/>
</dbReference>
<dbReference type="GO" id="GO:0042777">
    <property type="term" value="P:proton motive force-driven plasma membrane ATP synthesis"/>
    <property type="evidence" value="ECO:0007669"/>
    <property type="project" value="UniProtKB-UniRule"/>
</dbReference>
<dbReference type="CDD" id="cd12151">
    <property type="entry name" value="F1-ATPase_gamma"/>
    <property type="match status" value="1"/>
</dbReference>
<dbReference type="FunFam" id="1.10.287.80:FF:000005">
    <property type="entry name" value="ATP synthase gamma chain"/>
    <property type="match status" value="1"/>
</dbReference>
<dbReference type="Gene3D" id="3.40.1380.10">
    <property type="match status" value="1"/>
</dbReference>
<dbReference type="Gene3D" id="1.10.287.80">
    <property type="entry name" value="ATP synthase, gamma subunit, helix hairpin domain"/>
    <property type="match status" value="2"/>
</dbReference>
<dbReference type="HAMAP" id="MF_00815">
    <property type="entry name" value="ATP_synth_gamma_bact"/>
    <property type="match status" value="1"/>
</dbReference>
<dbReference type="InterPro" id="IPR035968">
    <property type="entry name" value="ATP_synth_F1_ATPase_gsu"/>
</dbReference>
<dbReference type="InterPro" id="IPR000131">
    <property type="entry name" value="ATP_synth_F1_gsu"/>
</dbReference>
<dbReference type="InterPro" id="IPR023632">
    <property type="entry name" value="ATP_synth_F1_gsu_CS"/>
</dbReference>
<dbReference type="NCBIfam" id="TIGR01146">
    <property type="entry name" value="ATPsyn_F1gamma"/>
    <property type="match status" value="1"/>
</dbReference>
<dbReference type="NCBIfam" id="NF004144">
    <property type="entry name" value="PRK05621.1-1"/>
    <property type="match status" value="1"/>
</dbReference>
<dbReference type="PANTHER" id="PTHR11693">
    <property type="entry name" value="ATP SYNTHASE GAMMA CHAIN"/>
    <property type="match status" value="1"/>
</dbReference>
<dbReference type="PANTHER" id="PTHR11693:SF22">
    <property type="entry name" value="ATP SYNTHASE SUBUNIT GAMMA, MITOCHONDRIAL"/>
    <property type="match status" value="1"/>
</dbReference>
<dbReference type="Pfam" id="PF00231">
    <property type="entry name" value="ATP-synt"/>
    <property type="match status" value="1"/>
</dbReference>
<dbReference type="PRINTS" id="PR00126">
    <property type="entry name" value="ATPASEGAMMA"/>
</dbReference>
<dbReference type="SUPFAM" id="SSF52943">
    <property type="entry name" value="ATP synthase (F1-ATPase), gamma subunit"/>
    <property type="match status" value="1"/>
</dbReference>
<dbReference type="PROSITE" id="PS00153">
    <property type="entry name" value="ATPASE_GAMMA"/>
    <property type="match status" value="1"/>
</dbReference>
<keyword id="KW-0066">ATP synthesis</keyword>
<keyword id="KW-0997">Cell inner membrane</keyword>
<keyword id="KW-1003">Cell membrane</keyword>
<keyword id="KW-0139">CF(1)</keyword>
<keyword id="KW-0375">Hydrogen ion transport</keyword>
<keyword id="KW-0406">Ion transport</keyword>
<keyword id="KW-0472">Membrane</keyword>
<keyword id="KW-1185">Reference proteome</keyword>
<keyword id="KW-0813">Transport</keyword>
<organism>
    <name type="scientific">Bordetella pertussis (strain Tohama I / ATCC BAA-589 / NCTC 13251)</name>
    <dbReference type="NCBI Taxonomy" id="257313"/>
    <lineage>
        <taxon>Bacteria</taxon>
        <taxon>Pseudomonadati</taxon>
        <taxon>Pseudomonadota</taxon>
        <taxon>Betaproteobacteria</taxon>
        <taxon>Burkholderiales</taxon>
        <taxon>Alcaligenaceae</taxon>
        <taxon>Bordetella</taxon>
    </lineage>
</organism>
<evidence type="ECO:0000255" key="1">
    <source>
        <dbReference type="HAMAP-Rule" id="MF_00815"/>
    </source>
</evidence>
<name>ATPG_BORPE</name>
<gene>
    <name evidence="1" type="primary">atpG</name>
    <name type="ordered locus">BP3287</name>
</gene>
<accession>Q7VU45</accession>
<proteinExistence type="inferred from homology"/>
<sequence>MPGIKEIRTKIKSVQNTRKITKAMEMVAASKMRKAQERMRAGRPYATKVREIAAHLMQANPEYSHPYLVEREVKAVGVVLVTTDKGLCGGLNTNISRVTLSKLKEFEQRSIKVQATAFGNKGLGLLTRIGAKLVSQEVQLGDKPDLDRLLGAIKVQLDDYLEGRIDALYVATTRFVNTMKQEPVFLRLLPLSNGLDDPFQSGVETLAKTAEIKSDYSWDYIYEPDAKSVIDDLLQRYVEGLLYQAVAENMASEQSARMVAMKSASDNAKKVIGDLQLVYNKTRQAAITKEISEIVGGAAAV</sequence>
<feature type="chain" id="PRO_0000073247" description="ATP synthase gamma chain">
    <location>
        <begin position="1"/>
        <end position="301"/>
    </location>
</feature>
<comment type="function">
    <text evidence="1">Produces ATP from ADP in the presence of a proton gradient across the membrane. The gamma chain is believed to be important in regulating ATPase activity and the flow of protons through the CF(0) complex.</text>
</comment>
<comment type="subunit">
    <text evidence="1">F-type ATPases have 2 components, CF(1) - the catalytic core - and CF(0) - the membrane proton channel. CF(1) has five subunits: alpha(3), beta(3), gamma(1), delta(1), epsilon(1). CF(0) has three main subunits: a, b and c.</text>
</comment>
<comment type="subcellular location">
    <subcellularLocation>
        <location evidence="1">Cell inner membrane</location>
        <topology evidence="1">Peripheral membrane protein</topology>
    </subcellularLocation>
</comment>
<comment type="similarity">
    <text evidence="1">Belongs to the ATPase gamma chain family.</text>
</comment>
<protein>
    <recommendedName>
        <fullName evidence="1">ATP synthase gamma chain</fullName>
    </recommendedName>
    <alternativeName>
        <fullName evidence="1">ATP synthase F1 sector gamma subunit</fullName>
    </alternativeName>
    <alternativeName>
        <fullName evidence="1">F-ATPase gamma subunit</fullName>
    </alternativeName>
</protein>